<organism>
    <name type="scientific">Cavia porcellus</name>
    <name type="common">Guinea pig</name>
    <dbReference type="NCBI Taxonomy" id="10141"/>
    <lineage>
        <taxon>Eukaryota</taxon>
        <taxon>Metazoa</taxon>
        <taxon>Chordata</taxon>
        <taxon>Craniata</taxon>
        <taxon>Vertebrata</taxon>
        <taxon>Euteleostomi</taxon>
        <taxon>Mammalia</taxon>
        <taxon>Eutheria</taxon>
        <taxon>Euarchontoglires</taxon>
        <taxon>Glires</taxon>
        <taxon>Rodentia</taxon>
        <taxon>Hystricomorpha</taxon>
        <taxon>Caviidae</taxon>
        <taxon>Cavia</taxon>
    </lineage>
</organism>
<keyword id="KW-0007">Acetylation</keyword>
<keyword id="KW-0106">Calcium</keyword>
<keyword id="KW-0479">Metal-binding</keyword>
<keyword id="KW-1185">Reference proteome</keyword>
<keyword id="KW-0677">Repeat</keyword>
<gene>
    <name type="primary">OCM</name>
</gene>
<reference key="1">
    <citation type="journal article" date="1997" name="Hear. Res.">
        <title>Oncomodulin is abundant in the organ of Corti.</title>
        <authorList>
            <person name="Henzl M.T."/>
            <person name="Shibasaki O."/>
            <person name="Comegys T.H."/>
            <person name="Thalmann I."/>
            <person name="Thalmann R."/>
        </authorList>
    </citation>
    <scope>NUCLEOTIDE SEQUENCE [MRNA]</scope>
    <source>
        <tissue>Organ of Corti</tissue>
    </source>
</reference>
<dbReference type="EMBL" id="U77842">
    <property type="protein sequence ID" value="AAB61901.1"/>
    <property type="molecule type" value="mRNA"/>
</dbReference>
<dbReference type="RefSeq" id="NP_001166459.1">
    <property type="nucleotide sequence ID" value="NM_001172988.2"/>
</dbReference>
<dbReference type="BMRB" id="O35508"/>
<dbReference type="SMR" id="O35508"/>
<dbReference type="FunCoup" id="O35508">
    <property type="interactions" value="2"/>
</dbReference>
<dbReference type="STRING" id="10141.ENSCPOP00000010715"/>
<dbReference type="Ensembl" id="ENSCPOT00000012026.3">
    <property type="protein sequence ID" value="ENSCPOP00000010715.2"/>
    <property type="gene ID" value="ENSCPOG00000011911.4"/>
</dbReference>
<dbReference type="GeneID" id="100135585"/>
<dbReference type="KEGG" id="cpoc:100135585"/>
<dbReference type="CTD" id="654231"/>
<dbReference type="VEuPathDB" id="HostDB:ENSCPOG00000011911"/>
<dbReference type="eggNOG" id="KOG0027">
    <property type="taxonomic scope" value="Eukaryota"/>
</dbReference>
<dbReference type="GeneTree" id="ENSGT00940000161875"/>
<dbReference type="HOGENOM" id="CLU_157356_0_0_1"/>
<dbReference type="InParanoid" id="O35508"/>
<dbReference type="OMA" id="CTCISIL"/>
<dbReference type="OrthoDB" id="26525at2759"/>
<dbReference type="TreeFam" id="TF332342"/>
<dbReference type="Proteomes" id="UP000005447">
    <property type="component" value="Unassembled WGS sequence"/>
</dbReference>
<dbReference type="Bgee" id="ENSCPOG00000011911">
    <property type="expression patterns" value="Expressed in testis and 1 other cell type or tissue"/>
</dbReference>
<dbReference type="GO" id="GO:0005737">
    <property type="term" value="C:cytoplasm"/>
    <property type="evidence" value="ECO:0007669"/>
    <property type="project" value="TreeGrafter"/>
</dbReference>
<dbReference type="GO" id="GO:0005509">
    <property type="term" value="F:calcium ion binding"/>
    <property type="evidence" value="ECO:0007669"/>
    <property type="project" value="InterPro"/>
</dbReference>
<dbReference type="CDD" id="cd16255">
    <property type="entry name" value="EFh_parvalbumin_beta"/>
    <property type="match status" value="1"/>
</dbReference>
<dbReference type="FunFam" id="1.10.238.10:FF:000060">
    <property type="entry name" value="Parvalbumin, thymic"/>
    <property type="match status" value="1"/>
</dbReference>
<dbReference type="Gene3D" id="1.10.238.10">
    <property type="entry name" value="EF-hand"/>
    <property type="match status" value="1"/>
</dbReference>
<dbReference type="InterPro" id="IPR011992">
    <property type="entry name" value="EF-hand-dom_pair"/>
</dbReference>
<dbReference type="InterPro" id="IPR018247">
    <property type="entry name" value="EF_Hand_1_Ca_BS"/>
</dbReference>
<dbReference type="InterPro" id="IPR002048">
    <property type="entry name" value="EF_hand_dom"/>
</dbReference>
<dbReference type="InterPro" id="IPR008080">
    <property type="entry name" value="Parvalbumin"/>
</dbReference>
<dbReference type="PANTHER" id="PTHR11653:SF4">
    <property type="entry name" value="ONCOMODULIN-2-RELATED"/>
    <property type="match status" value="1"/>
</dbReference>
<dbReference type="PANTHER" id="PTHR11653">
    <property type="entry name" value="PARVALBUMIN ALPHA"/>
    <property type="match status" value="1"/>
</dbReference>
<dbReference type="Pfam" id="PF13499">
    <property type="entry name" value="EF-hand_7"/>
    <property type="match status" value="1"/>
</dbReference>
<dbReference type="PRINTS" id="PR01697">
    <property type="entry name" value="PARVALBUMIN"/>
</dbReference>
<dbReference type="SMART" id="SM00054">
    <property type="entry name" value="EFh"/>
    <property type="match status" value="2"/>
</dbReference>
<dbReference type="SUPFAM" id="SSF47473">
    <property type="entry name" value="EF-hand"/>
    <property type="match status" value="1"/>
</dbReference>
<dbReference type="PROSITE" id="PS00018">
    <property type="entry name" value="EF_HAND_1"/>
    <property type="match status" value="2"/>
</dbReference>
<dbReference type="PROSITE" id="PS50222">
    <property type="entry name" value="EF_HAND_2"/>
    <property type="match status" value="2"/>
</dbReference>
<evidence type="ECO:0000250" key="1"/>
<evidence type="ECO:0000250" key="2">
    <source>
        <dbReference type="UniProtKB" id="P02631"/>
    </source>
</evidence>
<evidence type="ECO:0000250" key="3">
    <source>
        <dbReference type="UniProtKB" id="P0CE72"/>
    </source>
</evidence>
<evidence type="ECO:0000255" key="4">
    <source>
        <dbReference type="PROSITE-ProRule" id="PRU00448"/>
    </source>
</evidence>
<evidence type="ECO:0000305" key="5"/>
<comment type="function">
    <text evidence="1">Has some calmodulin-like activity with respect to enzyme activation and growth regulation. Binds two calcium ions (By similarity).</text>
</comment>
<comment type="tissue specificity">
    <text>Abundant in the organ of Corti.</text>
</comment>
<comment type="similarity">
    <text evidence="5">Belongs to the parvalbumin family.</text>
</comment>
<accession>O35508</accession>
<sequence>MSITDVLSADDIAAALQECQDPDTFEPQKFFQTSGLSKMSASQVKDVFRFIDNDQSGYLDEEELKFFLQKFESGARELTESETKSLMAAADNDGDGKIGADEFQEMVHS</sequence>
<name>ONCO_CAVPO</name>
<feature type="initiator methionine" description="Removed" evidence="2">
    <location>
        <position position="1"/>
    </location>
</feature>
<feature type="chain" id="PRO_0000073581" description="Oncomodulin">
    <location>
        <begin position="2"/>
        <end position="109"/>
    </location>
</feature>
<feature type="domain" description="EF-hand 1" evidence="4">
    <location>
        <begin position="39"/>
        <end position="74"/>
    </location>
</feature>
<feature type="domain" description="EF-hand 2" evidence="4">
    <location>
        <begin position="78"/>
        <end position="109"/>
    </location>
</feature>
<feature type="binding site" evidence="3 4">
    <location>
        <position position="52"/>
    </location>
    <ligand>
        <name>Ca(2+)</name>
        <dbReference type="ChEBI" id="CHEBI:29108"/>
        <label>1</label>
    </ligand>
</feature>
<feature type="binding site" evidence="4">
    <location>
        <position position="54"/>
    </location>
    <ligand>
        <name>Ca(2+)</name>
        <dbReference type="ChEBI" id="CHEBI:29108"/>
        <label>1</label>
    </ligand>
</feature>
<feature type="binding site" evidence="3 4">
    <location>
        <position position="56"/>
    </location>
    <ligand>
        <name>Ca(2+)</name>
        <dbReference type="ChEBI" id="CHEBI:29108"/>
        <label>1</label>
    </ligand>
</feature>
<feature type="binding site" evidence="3 4">
    <location>
        <position position="58"/>
    </location>
    <ligand>
        <name>Ca(2+)</name>
        <dbReference type="ChEBI" id="CHEBI:29108"/>
        <label>1</label>
    </ligand>
</feature>
<feature type="binding site" evidence="3 4">
    <location>
        <position position="63"/>
    </location>
    <ligand>
        <name>Ca(2+)</name>
        <dbReference type="ChEBI" id="CHEBI:29108"/>
        <label>1</label>
    </ligand>
</feature>
<feature type="binding site" evidence="4">
    <location>
        <position position="91"/>
    </location>
    <ligand>
        <name>Ca(2+)</name>
        <dbReference type="ChEBI" id="CHEBI:29108"/>
        <label>2</label>
    </ligand>
</feature>
<feature type="binding site" evidence="3 4">
    <location>
        <position position="93"/>
    </location>
    <ligand>
        <name>Ca(2+)</name>
        <dbReference type="ChEBI" id="CHEBI:29108"/>
        <label>2</label>
    </ligand>
</feature>
<feature type="binding site" evidence="3 4">
    <location>
        <position position="95"/>
    </location>
    <ligand>
        <name>Ca(2+)</name>
        <dbReference type="ChEBI" id="CHEBI:29108"/>
        <label>2</label>
    </ligand>
</feature>
<feature type="binding site" evidence="3 4">
    <location>
        <position position="97"/>
    </location>
    <ligand>
        <name>Ca(2+)</name>
        <dbReference type="ChEBI" id="CHEBI:29108"/>
        <label>2</label>
    </ligand>
</feature>
<feature type="binding site" evidence="3 4">
    <location>
        <position position="102"/>
    </location>
    <ligand>
        <name>Ca(2+)</name>
        <dbReference type="ChEBI" id="CHEBI:29108"/>
        <label>2</label>
    </ligand>
</feature>
<feature type="modified residue" description="N-acetylserine" evidence="2">
    <location>
        <position position="2"/>
    </location>
</feature>
<proteinExistence type="evidence at transcript level"/>
<protein>
    <recommendedName>
        <fullName>Oncomodulin</fullName>
        <shortName>OM</shortName>
    </recommendedName>
    <alternativeName>
        <fullName>CBP-15</fullName>
    </alternativeName>
    <alternativeName>
        <fullName>Parvalbumin beta</fullName>
    </alternativeName>
</protein>